<evidence type="ECO:0000250" key="1"/>
<evidence type="ECO:0000305" key="2"/>
<gene>
    <name type="primary">ntf7</name>
    <name type="synonym">nnt</name>
    <name type="synonym">nt7</name>
</gene>
<keyword id="KW-0165">Cleavage on pair of basic residues</keyword>
<keyword id="KW-1015">Disulfide bond</keyword>
<keyword id="KW-0339">Growth factor</keyword>
<keyword id="KW-1185">Reference proteome</keyword>
<keyword id="KW-0964">Secreted</keyword>
<reference key="1">
    <citation type="journal article" date="1998" name="Mol. Cell. Neurosci.">
        <title>Cloning and expression of a novel neurotrophin, NT-7, from carp.</title>
        <authorList>
            <person name="Lai K.-O."/>
            <person name="Fu W.-Y."/>
            <person name="Ip F.C.F."/>
            <person name="Ip N.Y."/>
        </authorList>
    </citation>
    <scope>NUCLEOTIDE SEQUENCE [GENOMIC DNA]</scope>
</reference>
<dbReference type="EMBL" id="U94949">
    <property type="protein sequence ID" value="AAC25632.1"/>
    <property type="molecule type" value="Genomic_DNA"/>
</dbReference>
<dbReference type="SMR" id="O93474"/>
<dbReference type="Proteomes" id="UP000694384">
    <property type="component" value="Unplaced"/>
</dbReference>
<dbReference type="Proteomes" id="UP000694427">
    <property type="component" value="Unplaced"/>
</dbReference>
<dbReference type="Proteomes" id="UP000694700">
    <property type="component" value="Unplaced"/>
</dbReference>
<dbReference type="Proteomes" id="UP000694701">
    <property type="component" value="Unplaced"/>
</dbReference>
<dbReference type="Proteomes" id="UP001155660">
    <property type="component" value="Unplaced"/>
</dbReference>
<dbReference type="GO" id="GO:0030424">
    <property type="term" value="C:axon"/>
    <property type="evidence" value="ECO:0007669"/>
    <property type="project" value="TreeGrafter"/>
</dbReference>
<dbReference type="GO" id="GO:0030425">
    <property type="term" value="C:dendrite"/>
    <property type="evidence" value="ECO:0007669"/>
    <property type="project" value="TreeGrafter"/>
</dbReference>
<dbReference type="GO" id="GO:0005615">
    <property type="term" value="C:extracellular space"/>
    <property type="evidence" value="ECO:0007669"/>
    <property type="project" value="TreeGrafter"/>
</dbReference>
<dbReference type="GO" id="GO:0008021">
    <property type="term" value="C:synaptic vesicle"/>
    <property type="evidence" value="ECO:0007669"/>
    <property type="project" value="TreeGrafter"/>
</dbReference>
<dbReference type="GO" id="GO:0008083">
    <property type="term" value="F:growth factor activity"/>
    <property type="evidence" value="ECO:0007669"/>
    <property type="project" value="UniProtKB-KW"/>
</dbReference>
<dbReference type="GO" id="GO:0005163">
    <property type="term" value="F:nerve growth factor receptor binding"/>
    <property type="evidence" value="ECO:0007669"/>
    <property type="project" value="TreeGrafter"/>
</dbReference>
<dbReference type="GO" id="GO:0007169">
    <property type="term" value="P:cell surface receptor protein tyrosine kinase signaling pathway"/>
    <property type="evidence" value="ECO:0007669"/>
    <property type="project" value="TreeGrafter"/>
</dbReference>
<dbReference type="GO" id="GO:0050804">
    <property type="term" value="P:modulation of chemical synaptic transmission"/>
    <property type="evidence" value="ECO:0007669"/>
    <property type="project" value="TreeGrafter"/>
</dbReference>
<dbReference type="GO" id="GO:0043524">
    <property type="term" value="P:negative regulation of neuron apoptotic process"/>
    <property type="evidence" value="ECO:0007669"/>
    <property type="project" value="TreeGrafter"/>
</dbReference>
<dbReference type="GO" id="GO:0021675">
    <property type="term" value="P:nerve development"/>
    <property type="evidence" value="ECO:0007669"/>
    <property type="project" value="TreeGrafter"/>
</dbReference>
<dbReference type="GO" id="GO:0038180">
    <property type="term" value="P:nerve growth factor signaling pathway"/>
    <property type="evidence" value="ECO:0007669"/>
    <property type="project" value="TreeGrafter"/>
</dbReference>
<dbReference type="GO" id="GO:0048812">
    <property type="term" value="P:neuron projection morphogenesis"/>
    <property type="evidence" value="ECO:0007669"/>
    <property type="project" value="TreeGrafter"/>
</dbReference>
<dbReference type="Gene3D" id="2.10.90.10">
    <property type="entry name" value="Cystine-knot cytokines"/>
    <property type="match status" value="1"/>
</dbReference>
<dbReference type="InterPro" id="IPR029034">
    <property type="entry name" value="Cystine-knot_cytokine"/>
</dbReference>
<dbReference type="InterPro" id="IPR020408">
    <property type="entry name" value="Nerve_growth_factor-like"/>
</dbReference>
<dbReference type="InterPro" id="IPR002072">
    <property type="entry name" value="Nerve_growth_factor-rel"/>
</dbReference>
<dbReference type="InterPro" id="IPR019846">
    <property type="entry name" value="Nerve_growth_factor_CS"/>
</dbReference>
<dbReference type="PANTHER" id="PTHR11589:SF10">
    <property type="entry name" value="BETA-NERVE GROWTH FACTOR"/>
    <property type="match status" value="1"/>
</dbReference>
<dbReference type="PANTHER" id="PTHR11589">
    <property type="entry name" value="NERVE GROWTH FACTOR NGF -RELATED"/>
    <property type="match status" value="1"/>
</dbReference>
<dbReference type="Pfam" id="PF00243">
    <property type="entry name" value="NGF"/>
    <property type="match status" value="1"/>
</dbReference>
<dbReference type="PIRSF" id="PIRSF001789">
    <property type="entry name" value="NGF"/>
    <property type="match status" value="1"/>
</dbReference>
<dbReference type="PRINTS" id="PR00268">
    <property type="entry name" value="NGF"/>
</dbReference>
<dbReference type="SMART" id="SM00140">
    <property type="entry name" value="NGF"/>
    <property type="match status" value="1"/>
</dbReference>
<dbReference type="SUPFAM" id="SSF57501">
    <property type="entry name" value="Cystine-knot cytokines"/>
    <property type="match status" value="1"/>
</dbReference>
<dbReference type="PROSITE" id="PS00248">
    <property type="entry name" value="NGF_1"/>
    <property type="match status" value="1"/>
</dbReference>
<dbReference type="PROSITE" id="PS50270">
    <property type="entry name" value="NGF_2"/>
    <property type="match status" value="1"/>
</dbReference>
<organism>
    <name type="scientific">Cyprinus carpio</name>
    <name type="common">Common carp</name>
    <dbReference type="NCBI Taxonomy" id="7962"/>
    <lineage>
        <taxon>Eukaryota</taxon>
        <taxon>Metazoa</taxon>
        <taxon>Chordata</taxon>
        <taxon>Craniata</taxon>
        <taxon>Vertebrata</taxon>
        <taxon>Euteleostomi</taxon>
        <taxon>Actinopterygii</taxon>
        <taxon>Neopterygii</taxon>
        <taxon>Teleostei</taxon>
        <taxon>Ostariophysi</taxon>
        <taxon>Cypriniformes</taxon>
        <taxon>Cyprinidae</taxon>
        <taxon>Cyprininae</taxon>
        <taxon>Cyprinus</taxon>
    </lineage>
</organism>
<comment type="subcellular location">
    <subcellularLocation>
        <location>Secreted</location>
    </subcellularLocation>
</comment>
<comment type="similarity">
    <text evidence="2">Belongs to the NGF-beta family.</text>
</comment>
<protein>
    <recommendedName>
        <fullName>Neurotrophin-7</fullName>
        <shortName>NT-7</shortName>
    </recommendedName>
</protein>
<feature type="propeptide" id="PRO_0000019679" evidence="1">
    <location>
        <begin position="1" status="less than"/>
        <end position="7"/>
    </location>
</feature>
<feature type="chain" id="PRO_0000019680" description="Neurotrophin-7">
    <location>
        <begin position="8"/>
        <end position="140"/>
    </location>
</feature>
<feature type="disulfide bond" evidence="1">
    <location>
        <begin position="21"/>
        <end position="101"/>
    </location>
</feature>
<feature type="disulfide bond" evidence="1">
    <location>
        <begin position="64"/>
        <end position="129"/>
    </location>
</feature>
<feature type="disulfide bond" evidence="1">
    <location>
        <begin position="89"/>
        <end position="131"/>
    </location>
</feature>
<feature type="sequence variant">
    <original>I</original>
    <variation>V</variation>
    <location>
        <position position="70"/>
    </location>
</feature>
<feature type="sequence variant">
    <original>E</original>
    <variation>K</variation>
    <location>
        <position position="95"/>
    </location>
</feature>
<feature type="non-terminal residue">
    <location>
        <position position="1"/>
    </location>
</feature>
<proteinExistence type="inferred from homology"/>
<accession>O93474</accession>
<sequence>PGPRVRRKANDFLHRGEYSVCDSEEHWVGNLTQATDLRGNEVTVLPHVRINNVVKKQMFYETTCRVSKPIGAPKPGQGVSGVKAGTSSCRGIDNEHWNSYCTNVHTFVRALTSYKNQIAWRFIRINAACVCVLSRNSWRH</sequence>
<name>NTF7_CYPCA</name>